<protein>
    <recommendedName>
        <fullName evidence="1">Bifunctional protein FolD</fullName>
    </recommendedName>
    <domain>
        <recommendedName>
            <fullName evidence="1">Methylenetetrahydrofolate dehydrogenase</fullName>
            <ecNumber evidence="1">1.5.1.5</ecNumber>
        </recommendedName>
    </domain>
    <domain>
        <recommendedName>
            <fullName evidence="1">Methenyltetrahydrofolate cyclohydrolase</fullName>
            <ecNumber evidence="1">3.5.4.9</ecNumber>
        </recommendedName>
    </domain>
</protein>
<sequence length="276" mass="30782">MIIDGVKISETKMERLKNEIEKIKNTGINPKMKIILIGNDYGSVVYSKAKMRRGSKLGIDVDLDRYDSISREDLIKLLKRYSQSDDIHGIMIETPVPGINYYDVVNEIPFYKDVDGMTSYNLGNLYLKNEFIAPATARAVVDILDYINIKSGNVAIINRSPVVGRPLSMMLLNRDFTVTVCHSRTVNINEITRSSDIVVVAVGKPNFLDRSYVSDKNIIIDVGINYLNGKTCGDADYENIKDYVNAITPVPGGVGPVTATDIFENFINGLKYQIKG</sequence>
<dbReference type="EC" id="1.5.1.5" evidence="1"/>
<dbReference type="EC" id="3.5.4.9" evidence="1"/>
<dbReference type="EMBL" id="AE017261">
    <property type="protein sequence ID" value="AAT43656.1"/>
    <property type="molecule type" value="Genomic_DNA"/>
</dbReference>
<dbReference type="RefSeq" id="WP_011177872.1">
    <property type="nucleotide sequence ID" value="NC_005877.1"/>
</dbReference>
<dbReference type="SMR" id="Q6L046"/>
<dbReference type="STRING" id="263820.PTO1071"/>
<dbReference type="PaxDb" id="263820-PTO1071"/>
<dbReference type="GeneID" id="2845254"/>
<dbReference type="KEGG" id="pto:PTO1071"/>
<dbReference type="PATRIC" id="fig|263820.9.peg.1111"/>
<dbReference type="eggNOG" id="arCOG04538">
    <property type="taxonomic scope" value="Archaea"/>
</dbReference>
<dbReference type="HOGENOM" id="CLU_034045_2_1_2"/>
<dbReference type="InParanoid" id="Q6L046"/>
<dbReference type="OrthoDB" id="9455at2157"/>
<dbReference type="UniPathway" id="UPA00193"/>
<dbReference type="Proteomes" id="UP000000438">
    <property type="component" value="Chromosome"/>
</dbReference>
<dbReference type="GO" id="GO:0005829">
    <property type="term" value="C:cytosol"/>
    <property type="evidence" value="ECO:0007669"/>
    <property type="project" value="TreeGrafter"/>
</dbReference>
<dbReference type="GO" id="GO:0004477">
    <property type="term" value="F:methenyltetrahydrofolate cyclohydrolase activity"/>
    <property type="evidence" value="ECO:0007669"/>
    <property type="project" value="UniProtKB-UniRule"/>
</dbReference>
<dbReference type="GO" id="GO:0004488">
    <property type="term" value="F:methylenetetrahydrofolate dehydrogenase (NADP+) activity"/>
    <property type="evidence" value="ECO:0007669"/>
    <property type="project" value="UniProtKB-UniRule"/>
</dbReference>
<dbReference type="GO" id="GO:0000105">
    <property type="term" value="P:L-histidine biosynthetic process"/>
    <property type="evidence" value="ECO:0007669"/>
    <property type="project" value="UniProtKB-KW"/>
</dbReference>
<dbReference type="GO" id="GO:0009086">
    <property type="term" value="P:methionine biosynthetic process"/>
    <property type="evidence" value="ECO:0007669"/>
    <property type="project" value="UniProtKB-KW"/>
</dbReference>
<dbReference type="GO" id="GO:0006164">
    <property type="term" value="P:purine nucleotide biosynthetic process"/>
    <property type="evidence" value="ECO:0007669"/>
    <property type="project" value="UniProtKB-KW"/>
</dbReference>
<dbReference type="GO" id="GO:0035999">
    <property type="term" value="P:tetrahydrofolate interconversion"/>
    <property type="evidence" value="ECO:0007669"/>
    <property type="project" value="UniProtKB-UniRule"/>
</dbReference>
<dbReference type="CDD" id="cd01080">
    <property type="entry name" value="NAD_bind_m-THF_DH_Cyclohyd"/>
    <property type="match status" value="1"/>
</dbReference>
<dbReference type="Gene3D" id="3.40.50.10860">
    <property type="entry name" value="Leucine Dehydrogenase, chain A, domain 1"/>
    <property type="match status" value="1"/>
</dbReference>
<dbReference type="Gene3D" id="3.40.50.720">
    <property type="entry name" value="NAD(P)-binding Rossmann-like Domain"/>
    <property type="match status" value="1"/>
</dbReference>
<dbReference type="HAMAP" id="MF_01576">
    <property type="entry name" value="THF_DHG_CYH"/>
    <property type="match status" value="1"/>
</dbReference>
<dbReference type="InterPro" id="IPR046346">
    <property type="entry name" value="Aminoacid_DH-like_N_sf"/>
</dbReference>
<dbReference type="InterPro" id="IPR054993">
    <property type="entry name" value="FolD_Thplmales"/>
</dbReference>
<dbReference type="InterPro" id="IPR036291">
    <property type="entry name" value="NAD(P)-bd_dom_sf"/>
</dbReference>
<dbReference type="InterPro" id="IPR000672">
    <property type="entry name" value="THF_DH/CycHdrlase"/>
</dbReference>
<dbReference type="InterPro" id="IPR020630">
    <property type="entry name" value="THF_DH/CycHdrlase_cat_dom"/>
</dbReference>
<dbReference type="InterPro" id="IPR020631">
    <property type="entry name" value="THF_DH/CycHdrlase_NAD-bd_dom"/>
</dbReference>
<dbReference type="NCBIfam" id="NF041156">
    <property type="entry name" value="FolD_Thplmales"/>
    <property type="match status" value="1"/>
</dbReference>
<dbReference type="PANTHER" id="PTHR48099:SF5">
    <property type="entry name" value="C-1-TETRAHYDROFOLATE SYNTHASE, CYTOPLASMIC"/>
    <property type="match status" value="1"/>
</dbReference>
<dbReference type="PANTHER" id="PTHR48099">
    <property type="entry name" value="C-1-TETRAHYDROFOLATE SYNTHASE, CYTOPLASMIC-RELATED"/>
    <property type="match status" value="1"/>
</dbReference>
<dbReference type="Pfam" id="PF00763">
    <property type="entry name" value="THF_DHG_CYH"/>
    <property type="match status" value="1"/>
</dbReference>
<dbReference type="Pfam" id="PF02882">
    <property type="entry name" value="THF_DHG_CYH_C"/>
    <property type="match status" value="1"/>
</dbReference>
<dbReference type="PRINTS" id="PR00085">
    <property type="entry name" value="THFDHDRGNASE"/>
</dbReference>
<dbReference type="SUPFAM" id="SSF53223">
    <property type="entry name" value="Aminoacid dehydrogenase-like, N-terminal domain"/>
    <property type="match status" value="1"/>
</dbReference>
<dbReference type="SUPFAM" id="SSF51735">
    <property type="entry name" value="NAD(P)-binding Rossmann-fold domains"/>
    <property type="match status" value="1"/>
</dbReference>
<evidence type="ECO:0000255" key="1">
    <source>
        <dbReference type="HAMAP-Rule" id="MF_01576"/>
    </source>
</evidence>
<reference key="1">
    <citation type="journal article" date="2004" name="Proc. Natl. Acad. Sci. U.S.A.">
        <title>Genome sequence of Picrophilus torridus and its implications for life around pH 0.</title>
        <authorList>
            <person name="Fuetterer O."/>
            <person name="Angelov A."/>
            <person name="Liesegang H."/>
            <person name="Gottschalk G."/>
            <person name="Schleper C."/>
            <person name="Schepers B."/>
            <person name="Dock C."/>
            <person name="Antranikian G."/>
            <person name="Liebl W."/>
        </authorList>
    </citation>
    <scope>NUCLEOTIDE SEQUENCE [LARGE SCALE GENOMIC DNA]</scope>
    <source>
        <strain>ATCC 700027 / DSM 9790 / JCM 10055 / NBRC 100828 / KAW 2/3</strain>
    </source>
</reference>
<organism>
    <name type="scientific">Picrophilus torridus (strain ATCC 700027 / DSM 9790 / JCM 10055 / NBRC 100828 / KAW 2/3)</name>
    <dbReference type="NCBI Taxonomy" id="1122961"/>
    <lineage>
        <taxon>Archaea</taxon>
        <taxon>Methanobacteriati</taxon>
        <taxon>Thermoplasmatota</taxon>
        <taxon>Thermoplasmata</taxon>
        <taxon>Thermoplasmatales</taxon>
        <taxon>Picrophilaceae</taxon>
        <taxon>Picrophilus</taxon>
    </lineage>
</organism>
<name>FOLD_PICTO</name>
<keyword id="KW-0028">Amino-acid biosynthesis</keyword>
<keyword id="KW-0368">Histidine biosynthesis</keyword>
<keyword id="KW-0378">Hydrolase</keyword>
<keyword id="KW-0486">Methionine biosynthesis</keyword>
<keyword id="KW-0511">Multifunctional enzyme</keyword>
<keyword id="KW-0521">NADP</keyword>
<keyword id="KW-0554">One-carbon metabolism</keyword>
<keyword id="KW-0560">Oxidoreductase</keyword>
<keyword id="KW-0658">Purine biosynthesis</keyword>
<feature type="chain" id="PRO_0000268588" description="Bifunctional protein FolD">
    <location>
        <begin position="1"/>
        <end position="276"/>
    </location>
</feature>
<feature type="binding site" evidence="1">
    <location>
        <begin position="158"/>
        <end position="160"/>
    </location>
    <ligand>
        <name>NADP(+)</name>
        <dbReference type="ChEBI" id="CHEBI:58349"/>
    </ligand>
</feature>
<feature type="binding site" evidence="1">
    <location>
        <position position="183"/>
    </location>
    <ligand>
        <name>NADP(+)</name>
        <dbReference type="ChEBI" id="CHEBI:58349"/>
    </ligand>
</feature>
<feature type="binding site" evidence="1">
    <location>
        <position position="224"/>
    </location>
    <ligand>
        <name>NADP(+)</name>
        <dbReference type="ChEBI" id="CHEBI:58349"/>
    </ligand>
</feature>
<accession>Q6L046</accession>
<proteinExistence type="inferred from homology"/>
<comment type="function">
    <text evidence="1">Catalyzes the oxidation of 5,10-methylenetetrahydrofolate to 5,10-methenyltetrahydrofolate and then the hydrolysis of 5,10-methenyltetrahydrofolate to 10-formyltetrahydrofolate.</text>
</comment>
<comment type="catalytic activity">
    <reaction evidence="1">
        <text>(6R)-5,10-methylene-5,6,7,8-tetrahydrofolate + NADP(+) = (6R)-5,10-methenyltetrahydrofolate + NADPH</text>
        <dbReference type="Rhea" id="RHEA:22812"/>
        <dbReference type="ChEBI" id="CHEBI:15636"/>
        <dbReference type="ChEBI" id="CHEBI:57455"/>
        <dbReference type="ChEBI" id="CHEBI:57783"/>
        <dbReference type="ChEBI" id="CHEBI:58349"/>
        <dbReference type="EC" id="1.5.1.5"/>
    </reaction>
</comment>
<comment type="catalytic activity">
    <reaction evidence="1">
        <text>(6R)-5,10-methenyltetrahydrofolate + H2O = (6R)-10-formyltetrahydrofolate + H(+)</text>
        <dbReference type="Rhea" id="RHEA:23700"/>
        <dbReference type="ChEBI" id="CHEBI:15377"/>
        <dbReference type="ChEBI" id="CHEBI:15378"/>
        <dbReference type="ChEBI" id="CHEBI:57455"/>
        <dbReference type="ChEBI" id="CHEBI:195366"/>
        <dbReference type="EC" id="3.5.4.9"/>
    </reaction>
</comment>
<comment type="pathway">
    <text evidence="1">One-carbon metabolism; tetrahydrofolate interconversion.</text>
</comment>
<comment type="subunit">
    <text evidence="1">Homodimer.</text>
</comment>
<comment type="similarity">
    <text evidence="1">Belongs to the tetrahydrofolate dehydrogenase/cyclohydrolase family.</text>
</comment>
<gene>
    <name evidence="1" type="primary">folD</name>
    <name type="ordered locus">PTO1071</name>
</gene>